<comment type="catalytic activity">
    <reaction evidence="1">
        <text>D-arabinose 5-phosphate + phosphoenolpyruvate + H2O = 3-deoxy-alpha-D-manno-2-octulosonate-8-phosphate + phosphate</text>
        <dbReference type="Rhea" id="RHEA:14053"/>
        <dbReference type="ChEBI" id="CHEBI:15377"/>
        <dbReference type="ChEBI" id="CHEBI:43474"/>
        <dbReference type="ChEBI" id="CHEBI:57693"/>
        <dbReference type="ChEBI" id="CHEBI:58702"/>
        <dbReference type="ChEBI" id="CHEBI:85985"/>
        <dbReference type="EC" id="2.5.1.55"/>
    </reaction>
</comment>
<comment type="pathway">
    <text evidence="1">Carbohydrate biosynthesis; 3-deoxy-D-manno-octulosonate biosynthesis; 3-deoxy-D-manno-octulosonate from D-ribulose 5-phosphate: step 2/3.</text>
</comment>
<comment type="pathway">
    <text evidence="1">Bacterial outer membrane biogenesis; lipopolysaccharide biosynthesis.</text>
</comment>
<comment type="subcellular location">
    <subcellularLocation>
        <location evidence="1">Cytoplasm</location>
    </subcellularLocation>
</comment>
<comment type="similarity">
    <text evidence="1">Belongs to the KdsA family.</text>
</comment>
<proteinExistence type="inferred from homology"/>
<accession>B6J3X3</accession>
<evidence type="ECO:0000255" key="1">
    <source>
        <dbReference type="HAMAP-Rule" id="MF_00056"/>
    </source>
</evidence>
<dbReference type="EC" id="2.5.1.55" evidence="1"/>
<dbReference type="EMBL" id="CP001019">
    <property type="protein sequence ID" value="ACJ17780.1"/>
    <property type="molecule type" value="Genomic_DNA"/>
</dbReference>
<dbReference type="RefSeq" id="WP_010958364.1">
    <property type="nucleotide sequence ID" value="NC_011527.1"/>
</dbReference>
<dbReference type="SMR" id="B6J3X3"/>
<dbReference type="KEGG" id="cbg:CbuG_0346"/>
<dbReference type="HOGENOM" id="CLU_036666_0_0_6"/>
<dbReference type="UniPathway" id="UPA00030"/>
<dbReference type="UniPathway" id="UPA00357">
    <property type="reaction ID" value="UER00474"/>
</dbReference>
<dbReference type="GO" id="GO:0005737">
    <property type="term" value="C:cytoplasm"/>
    <property type="evidence" value="ECO:0007669"/>
    <property type="project" value="UniProtKB-SubCell"/>
</dbReference>
<dbReference type="GO" id="GO:0008676">
    <property type="term" value="F:3-deoxy-8-phosphooctulonate synthase activity"/>
    <property type="evidence" value="ECO:0007669"/>
    <property type="project" value="UniProtKB-UniRule"/>
</dbReference>
<dbReference type="GO" id="GO:0019294">
    <property type="term" value="P:keto-3-deoxy-D-manno-octulosonic acid biosynthetic process"/>
    <property type="evidence" value="ECO:0007669"/>
    <property type="project" value="UniProtKB-UniRule"/>
</dbReference>
<dbReference type="Gene3D" id="3.20.20.70">
    <property type="entry name" value="Aldolase class I"/>
    <property type="match status" value="1"/>
</dbReference>
<dbReference type="HAMAP" id="MF_00056">
    <property type="entry name" value="KDO8P_synth"/>
    <property type="match status" value="1"/>
</dbReference>
<dbReference type="InterPro" id="IPR013785">
    <property type="entry name" value="Aldolase_TIM"/>
</dbReference>
<dbReference type="InterPro" id="IPR006218">
    <property type="entry name" value="DAHP1/KDSA"/>
</dbReference>
<dbReference type="InterPro" id="IPR006269">
    <property type="entry name" value="KDO8P_synthase"/>
</dbReference>
<dbReference type="NCBIfam" id="TIGR01362">
    <property type="entry name" value="KDO8P_synth"/>
    <property type="match status" value="1"/>
</dbReference>
<dbReference type="NCBIfam" id="NF003543">
    <property type="entry name" value="PRK05198.1"/>
    <property type="match status" value="1"/>
</dbReference>
<dbReference type="PANTHER" id="PTHR21057">
    <property type="entry name" value="PHOSPHO-2-DEHYDRO-3-DEOXYHEPTONATE ALDOLASE"/>
    <property type="match status" value="1"/>
</dbReference>
<dbReference type="Pfam" id="PF00793">
    <property type="entry name" value="DAHP_synth_1"/>
    <property type="match status" value="1"/>
</dbReference>
<dbReference type="SUPFAM" id="SSF51569">
    <property type="entry name" value="Aldolase"/>
    <property type="match status" value="1"/>
</dbReference>
<feature type="chain" id="PRO_1000091807" description="2-dehydro-3-deoxyphosphooctonate aldolase">
    <location>
        <begin position="1"/>
        <end position="280"/>
    </location>
</feature>
<name>KDSA_COXB2</name>
<protein>
    <recommendedName>
        <fullName evidence="1">2-dehydro-3-deoxyphosphooctonate aldolase</fullName>
        <ecNumber evidence="1">2.5.1.55</ecNumber>
    </recommendedName>
    <alternativeName>
        <fullName evidence="1">3-deoxy-D-manno-octulosonic acid 8-phosphate synthase</fullName>
    </alternativeName>
    <alternativeName>
        <fullName evidence="1">KDO-8-phosphate synthase</fullName>
        <shortName evidence="1">KDO 8-P synthase</shortName>
        <shortName evidence="1">KDOPS</shortName>
    </alternativeName>
    <alternativeName>
        <fullName evidence="1">Phospho-2-dehydro-3-deoxyoctonate aldolase</fullName>
    </alternativeName>
</protein>
<keyword id="KW-0963">Cytoplasm</keyword>
<keyword id="KW-0448">Lipopolysaccharide biosynthesis</keyword>
<keyword id="KW-0808">Transferase</keyword>
<gene>
    <name evidence="1" type="primary">kdsA</name>
    <name type="ordered locus">CbuG_0346</name>
</gene>
<organism>
    <name type="scientific">Coxiella burnetii (strain CbuG_Q212)</name>
    <name type="common">Coxiella burnetii (strain Q212)</name>
    <dbReference type="NCBI Taxonomy" id="434923"/>
    <lineage>
        <taxon>Bacteria</taxon>
        <taxon>Pseudomonadati</taxon>
        <taxon>Pseudomonadota</taxon>
        <taxon>Gammaproteobacteria</taxon>
        <taxon>Legionellales</taxon>
        <taxon>Coxiellaceae</taxon>
        <taxon>Coxiella</taxon>
    </lineage>
</organism>
<sequence length="280" mass="30507">MLMQIADFEIGLNNPLFLIAGPCVIESEALVMDVAGELKSITQQLDMPFIFKASFDKANRSSHLSYRGPGIEKGLTILEKVKKTLEVPIITDVHEDTPLQEVAAVVDVLQTPAFLCRQSNFIRSVAACGKPVNIKKGQFLAPWEMKQVVAKAWATGNKKIMVCERGYSFGYNNLISDMRALAILRETACPVIFDATHSVQLPGGHGTNSGGQREFVPVLARAATAAGIAGIFMETHPDPDRALSDGPNSWPLAKMQPLLETLKELDKVVKNAGFLEQSSE</sequence>
<reference key="1">
    <citation type="journal article" date="2009" name="Infect. Immun.">
        <title>Comparative genomics reveal extensive transposon-mediated genomic plasticity and diversity among potential effector proteins within the genus Coxiella.</title>
        <authorList>
            <person name="Beare P.A."/>
            <person name="Unsworth N."/>
            <person name="Andoh M."/>
            <person name="Voth D.E."/>
            <person name="Omsland A."/>
            <person name="Gilk S.D."/>
            <person name="Williams K.P."/>
            <person name="Sobral B.W."/>
            <person name="Kupko J.J. III"/>
            <person name="Porcella S.F."/>
            <person name="Samuel J.E."/>
            <person name="Heinzen R.A."/>
        </authorList>
    </citation>
    <scope>NUCLEOTIDE SEQUENCE [LARGE SCALE GENOMIC DNA]</scope>
    <source>
        <strain>CbuG_Q212</strain>
    </source>
</reference>